<name>VLTF2_MONPV</name>
<reference key="1">
    <citation type="journal article" date="2013" name="Am. J. Trop. Med. Hyg.">
        <title>Detection of human monkeypox in the republic of the congo following intensive community education.</title>
        <authorList>
            <person name="Reynolds M.G."/>
            <person name="Emerson G.L."/>
            <person name="Pukuta E."/>
            <person name="Karhemere S."/>
            <person name="Muyembe J.J."/>
            <person name="Bikindou A."/>
            <person name="McCollum A.M."/>
            <person name="Moses C."/>
            <person name="Wilkins K."/>
            <person name="Zhao H."/>
            <person name="Damon I.K."/>
            <person name="Karem K.L."/>
            <person name="Li Y."/>
            <person name="Carroll D.S."/>
            <person name="Mombouli J.V."/>
        </authorList>
    </citation>
    <scope>NUCLEOTIDE SEQUENCE [GENOMIC DNA]</scope>
    <source>
        <strain>ROC2010</strain>
    </source>
</reference>
<reference key="2">
    <citation type="journal article" date="2022" name="J. Infect. Dis.">
        <title>Exportation of Monkeypox virus from the African continent.</title>
        <authorList>
            <person name="Mauldin M.R."/>
            <person name="McCollum A.M."/>
            <person name="Nakazawa Y.J."/>
            <person name="Mandra A."/>
            <person name="Whitehouse E.R."/>
            <person name="Davidson W."/>
            <person name="Zhao H."/>
            <person name="Gao J."/>
            <person name="Li Y."/>
            <person name="Doty J."/>
            <person name="Yinka-Ogunleye A."/>
            <person name="Akinpelu A."/>
            <person name="Aruna O."/>
            <person name="Naidoo D."/>
            <person name="Lewandowski K."/>
            <person name="Afrough B."/>
            <person name="Graham V."/>
            <person name="Aarons E."/>
            <person name="Hewson R."/>
            <person name="Vipond R."/>
            <person name="Dunning J."/>
            <person name="Chand M."/>
            <person name="Brown C."/>
            <person name="Cohen-Gihon I."/>
            <person name="Erez N."/>
            <person name="Shifman O."/>
            <person name="Israeli O."/>
            <person name="Sharon M."/>
            <person name="Schwartz E."/>
            <person name="Beth-Din A."/>
            <person name="Zvi A."/>
            <person name="Mak T.M."/>
            <person name="Ng Y.K."/>
            <person name="Cui L."/>
            <person name="Lin R.T.P."/>
            <person name="Olson V.A."/>
            <person name="Brooks T."/>
            <person name="Paran N."/>
            <person name="Ihekweazu C."/>
            <person name="Reynolds M.G."/>
        </authorList>
    </citation>
    <scope>NUCLEOTIDE SEQUENCE [LARGE SCALE GENOMIC DNA]</scope>
    <source>
        <strain>MPXV-M5312_HM12_Rivers</strain>
    </source>
</reference>
<sequence>MAKRVSLPDVVISAPKAVFKPAKEEALACILPKYYKSMADMSIKTNSVIDKCWFCNQDLVFRPISIETFKGGEVGYFCSKICRDSLASMVKSHVALREEPKISLLPLVFYEDKEKVINTINLLRDKDGVYGSCYFKENSQIIDISLRSLL</sequence>
<dbReference type="EMBL" id="KC257461">
    <property type="protein sequence ID" value="AGF37015.1"/>
    <property type="molecule type" value="Genomic_DNA"/>
</dbReference>
<dbReference type="EMBL" id="MT903340">
    <property type="protein sequence ID" value="QNP12981.1"/>
    <property type="molecule type" value="Genomic_DNA"/>
</dbReference>
<dbReference type="RefSeq" id="NP_536538.1">
    <property type="nucleotide sequence ID" value="NC_003310.1"/>
</dbReference>
<dbReference type="RefSeq" id="YP_010377108.1">
    <property type="nucleotide sequence ID" value="NC_063383.1"/>
</dbReference>
<dbReference type="GeneID" id="72551521"/>
<dbReference type="GeneID" id="929032"/>
<dbReference type="KEGG" id="vg:929032"/>
<dbReference type="Proteomes" id="UP000516359">
    <property type="component" value="Genome"/>
</dbReference>
<dbReference type="GO" id="GO:0008270">
    <property type="term" value="F:zinc ion binding"/>
    <property type="evidence" value="ECO:0007669"/>
    <property type="project" value="InterPro"/>
</dbReference>
<dbReference type="InterPro" id="IPR004975">
    <property type="entry name" value="Poxvirus_VLTF2"/>
</dbReference>
<dbReference type="InterPro" id="IPR010507">
    <property type="entry name" value="Znf_MYM"/>
</dbReference>
<dbReference type="Pfam" id="PF03295">
    <property type="entry name" value="Pox_TAA1"/>
    <property type="match status" value="1"/>
</dbReference>
<dbReference type="Pfam" id="PF06467">
    <property type="entry name" value="zf-FCS"/>
    <property type="match status" value="1"/>
</dbReference>
<gene>
    <name type="primary">OPG126</name>
    <name type="synonym">VLTF2</name>
    <name type="ORF">MPXVgp111</name>
</gene>
<accession>M1LLA2</accession>
<feature type="chain" id="PRO_0000457496" description="Viral late gene transcription factor 2">
    <location>
        <begin position="1"/>
        <end position="150"/>
    </location>
</feature>
<proteinExistence type="inferred from homology"/>
<evidence type="ECO:0000250" key="1">
    <source>
        <dbReference type="UniProtKB" id="P68319"/>
    </source>
</evidence>
<evidence type="ECO:0000305" key="2"/>
<comment type="function">
    <text evidence="1">Acts with RNA polymerase to initiate transcription from late gene promoters.</text>
</comment>
<comment type="subunit">
    <text evidence="1">Interacts with the late transcription elongation factor VLTF-4/OPG110. Interacts with the late transcription factors VLTF-1/OPG093.</text>
</comment>
<comment type="similarity">
    <text evidence="2">Belongs to the orthopoxvirus VLTF-2/OPG126 family.</text>
</comment>
<protein>
    <recommendedName>
        <fullName>Viral late gene transcription factor 2</fullName>
    </recommendedName>
    <alternativeName>
        <fullName>Trans-activator protein A1</fullName>
    </alternativeName>
</protein>
<organism>
    <name type="scientific">Monkeypox virus</name>
    <dbReference type="NCBI Taxonomy" id="10244"/>
    <lineage>
        <taxon>Viruses</taxon>
        <taxon>Varidnaviria</taxon>
        <taxon>Bamfordvirae</taxon>
        <taxon>Nucleocytoviricota</taxon>
        <taxon>Pokkesviricetes</taxon>
        <taxon>Chitovirales</taxon>
        <taxon>Poxviridae</taxon>
        <taxon>Chordopoxvirinae</taxon>
        <taxon>Orthopoxvirus</taxon>
    </lineage>
</organism>
<keyword id="KW-1185">Reference proteome</keyword>
<keyword id="KW-0804">Transcription</keyword>
<keyword id="KW-0805">Transcription regulation</keyword>
<organismHost>
    <name type="scientific">Cynomys gunnisoni</name>
    <name type="common">Gunnison's prairie dog</name>
    <name type="synonym">Spermophilus gunnisoni</name>
    <dbReference type="NCBI Taxonomy" id="45479"/>
</organismHost>
<organismHost>
    <name type="scientific">Cynomys leucurus</name>
    <name type="common">White-tailed prairie dog</name>
    <dbReference type="NCBI Taxonomy" id="99825"/>
</organismHost>
<organismHost>
    <name type="scientific">Cynomys ludovicianus</name>
    <name type="common">Black-tailed prairie dog</name>
    <dbReference type="NCBI Taxonomy" id="45480"/>
</organismHost>
<organismHost>
    <name type="scientific">Cynomys mexicanus</name>
    <name type="common">Mexican prairie dog</name>
    <dbReference type="NCBI Taxonomy" id="99826"/>
</organismHost>
<organismHost>
    <name type="scientific">Cynomys parvidens</name>
    <name type="common">Utah prairie dog</name>
    <dbReference type="NCBI Taxonomy" id="99827"/>
</organismHost>
<organismHost>
    <name type="scientific">Gliridae</name>
    <name type="common">dormice</name>
    <dbReference type="NCBI Taxonomy" id="30650"/>
</organismHost>
<organismHost>
    <name type="scientific">Heliosciurus ruwenzorii</name>
    <name type="common">Ruwenzori sun squirrel</name>
    <dbReference type="NCBI Taxonomy" id="226685"/>
</organismHost>
<organismHost>
    <name type="scientific">Homo sapiens</name>
    <name type="common">Human</name>
    <dbReference type="NCBI Taxonomy" id="9606"/>
</organismHost>
<organismHost>
    <name type="scientific">Mus musculus</name>
    <name type="common">Mouse</name>
    <dbReference type="NCBI Taxonomy" id="10090"/>
</organismHost>